<organism>
    <name type="scientific">Anopheles gambiae</name>
    <name type="common">African malaria mosquito</name>
    <dbReference type="NCBI Taxonomy" id="7165"/>
    <lineage>
        <taxon>Eukaryota</taxon>
        <taxon>Metazoa</taxon>
        <taxon>Ecdysozoa</taxon>
        <taxon>Arthropoda</taxon>
        <taxon>Hexapoda</taxon>
        <taxon>Insecta</taxon>
        <taxon>Pterygota</taxon>
        <taxon>Neoptera</taxon>
        <taxon>Endopterygota</taxon>
        <taxon>Diptera</taxon>
        <taxon>Nematocera</taxon>
        <taxon>Culicoidea</taxon>
        <taxon>Culicidae</taxon>
        <taxon>Anophelinae</taxon>
        <taxon>Anopheles</taxon>
    </lineage>
</organism>
<proteinExistence type="inferred from homology"/>
<feature type="chain" id="PRO_0000306374" description="Dynactin subunit 2">
    <location>
        <begin position="1"/>
        <end position="387"/>
    </location>
</feature>
<feature type="coiled-coil region" evidence="4">
    <location>
        <begin position="99"/>
        <end position="125"/>
    </location>
</feature>
<feature type="coiled-coil region" evidence="4">
    <location>
        <begin position="256"/>
        <end position="282"/>
    </location>
</feature>
<feature type="coiled-coil region" evidence="4">
    <location>
        <begin position="355"/>
        <end position="387"/>
    </location>
</feature>
<comment type="function">
    <text evidence="1">Modulates cytoplasmic dynein binding to an organelle, and plays a role in prometaphase chromosome alignment and spindle organization during mitosis.</text>
</comment>
<comment type="subunit">
    <text evidence="2">Subunit of dynactin, a multiprotein complex associated with dynein.</text>
</comment>
<comment type="subcellular location">
    <subcellularLocation>
        <location evidence="1">Cytoplasm</location>
        <location evidence="1">Cytoskeleton</location>
    </subcellularLocation>
    <subcellularLocation>
        <location evidence="2">Membrane</location>
        <topology evidence="2">Peripheral membrane protein</topology>
    </subcellularLocation>
</comment>
<comment type="similarity">
    <text evidence="4">Belongs to the dynactin subunit 2 family.</text>
</comment>
<evidence type="ECO:0000250" key="1"/>
<evidence type="ECO:0000250" key="2">
    <source>
        <dbReference type="UniProtKB" id="Q13561"/>
    </source>
</evidence>
<evidence type="ECO:0000250" key="3">
    <source>
        <dbReference type="UniProtKB" id="Q7K2D2"/>
    </source>
</evidence>
<evidence type="ECO:0000255" key="4"/>
<evidence type="ECO:0000312" key="5">
    <source>
        <dbReference type="EMBL" id="EAA00075.3"/>
    </source>
</evidence>
<protein>
    <recommendedName>
        <fullName>Dynactin subunit 2</fullName>
    </recommendedName>
    <alternativeName>
        <fullName evidence="3">Dynactin 2 p50 subunit</fullName>
    </alternativeName>
</protein>
<name>DCTN2_ANOGA</name>
<gene>
    <name evidence="3" type="primary">DCTN2-p50</name>
    <name evidence="3" type="synonym">Dmn</name>
    <name type="ORF">AGAP011690</name>
</gene>
<keyword id="KW-0175">Coiled coil</keyword>
<keyword id="KW-0963">Cytoplasm</keyword>
<keyword id="KW-0206">Cytoskeleton</keyword>
<keyword id="KW-0243">Dynein</keyword>
<keyword id="KW-0472">Membrane</keyword>
<keyword id="KW-0493">Microtubule</keyword>
<keyword id="KW-1185">Reference proteome</keyword>
<reference evidence="5" key="1">
    <citation type="journal article" date="2002" name="Science">
        <title>The genome sequence of the malaria mosquito Anopheles gambiae.</title>
        <authorList>
            <person name="Holt R.A."/>
            <person name="Subramanian G.M."/>
            <person name="Halpern A."/>
            <person name="Sutton G.G."/>
            <person name="Charlab R."/>
            <person name="Nusskern D.R."/>
            <person name="Wincker P."/>
            <person name="Clark A.G."/>
            <person name="Ribeiro J.M.C."/>
            <person name="Wides R."/>
            <person name="Salzberg S.L."/>
            <person name="Loftus B.J."/>
            <person name="Yandell M.D."/>
            <person name="Majoros W.H."/>
            <person name="Rusch D.B."/>
            <person name="Lai Z."/>
            <person name="Kraft C.L."/>
            <person name="Abril J.F."/>
            <person name="Anthouard V."/>
            <person name="Arensburger P."/>
            <person name="Atkinson P.W."/>
            <person name="Baden H."/>
            <person name="de Berardinis V."/>
            <person name="Baldwin D."/>
            <person name="Benes V."/>
            <person name="Biedler J."/>
            <person name="Blass C."/>
            <person name="Bolanos R."/>
            <person name="Boscus D."/>
            <person name="Barnstead M."/>
            <person name="Cai S."/>
            <person name="Center A."/>
            <person name="Chaturverdi K."/>
            <person name="Christophides G.K."/>
            <person name="Chrystal M.A.M."/>
            <person name="Clamp M."/>
            <person name="Cravchik A."/>
            <person name="Curwen V."/>
            <person name="Dana A."/>
            <person name="Delcher A."/>
            <person name="Dew I."/>
            <person name="Evans C.A."/>
            <person name="Flanigan M."/>
            <person name="Grundschober-Freimoser A."/>
            <person name="Friedli L."/>
            <person name="Gu Z."/>
            <person name="Guan P."/>
            <person name="Guigo R."/>
            <person name="Hillenmeyer M.E."/>
            <person name="Hladun S.L."/>
            <person name="Hogan J.R."/>
            <person name="Hong Y.S."/>
            <person name="Hoover J."/>
            <person name="Jaillon O."/>
            <person name="Ke Z."/>
            <person name="Kodira C.D."/>
            <person name="Kokoza E."/>
            <person name="Koutsos A."/>
            <person name="Letunic I."/>
            <person name="Levitsky A.A."/>
            <person name="Liang Y."/>
            <person name="Lin J.-J."/>
            <person name="Lobo N.F."/>
            <person name="Lopez J.R."/>
            <person name="Malek J.A."/>
            <person name="McIntosh T.C."/>
            <person name="Meister S."/>
            <person name="Miller J.R."/>
            <person name="Mobarry C."/>
            <person name="Mongin E."/>
            <person name="Murphy S.D."/>
            <person name="O'Brochta D.A."/>
            <person name="Pfannkoch C."/>
            <person name="Qi R."/>
            <person name="Regier M.A."/>
            <person name="Remington K."/>
            <person name="Shao H."/>
            <person name="Sharakhova M.V."/>
            <person name="Sitter C.D."/>
            <person name="Shetty J."/>
            <person name="Smith T.J."/>
            <person name="Strong R."/>
            <person name="Sun J."/>
            <person name="Thomasova D."/>
            <person name="Ton L.Q."/>
            <person name="Topalis P."/>
            <person name="Tu Z.J."/>
            <person name="Unger M.F."/>
            <person name="Walenz B."/>
            <person name="Wang A.H."/>
            <person name="Wang J."/>
            <person name="Wang M."/>
            <person name="Wang X."/>
            <person name="Woodford K.J."/>
            <person name="Wortman J.R."/>
            <person name="Wu M."/>
            <person name="Yao A."/>
            <person name="Zdobnov E.M."/>
            <person name="Zhang H."/>
            <person name="Zhao Q."/>
            <person name="Zhao S."/>
            <person name="Zhu S.C."/>
            <person name="Zhimulev I."/>
            <person name="Coluzzi M."/>
            <person name="della Torre A."/>
            <person name="Roth C.W."/>
            <person name="Louis C."/>
            <person name="Kalush F."/>
            <person name="Mural R.J."/>
            <person name="Myers E.W."/>
            <person name="Adams M.D."/>
            <person name="Smith H.O."/>
            <person name="Broder S."/>
            <person name="Gardner M.J."/>
            <person name="Fraser C.M."/>
            <person name="Birney E."/>
            <person name="Bork P."/>
            <person name="Brey P.T."/>
            <person name="Venter J.C."/>
            <person name="Weissenbach J."/>
            <person name="Kafatos F.C."/>
            <person name="Collins F.H."/>
            <person name="Hoffman S.L."/>
        </authorList>
    </citation>
    <scope>NUCLEOTIDE SEQUENCE [LARGE SCALE GENOMIC DNA]</scope>
    <source>
        <strain evidence="5">PEST</strain>
    </source>
</reference>
<dbReference type="EMBL" id="AAAB01008986">
    <property type="protein sequence ID" value="EAA00075.3"/>
    <property type="molecule type" value="Genomic_DNA"/>
</dbReference>
<dbReference type="RefSeq" id="XP_320820.3">
    <property type="nucleotide sequence ID" value="XM_320820.4"/>
</dbReference>
<dbReference type="SMR" id="Q7PZ25"/>
<dbReference type="FunCoup" id="Q7PZ25">
    <property type="interactions" value="1494"/>
</dbReference>
<dbReference type="STRING" id="7165.Q7PZ25"/>
<dbReference type="PaxDb" id="7165-AGAP011690-PA"/>
<dbReference type="EnsemblMetazoa" id="AGAP011690-RA">
    <property type="protein sequence ID" value="AGAP011690-PA"/>
    <property type="gene ID" value="AGAP011690"/>
</dbReference>
<dbReference type="GeneID" id="1280947"/>
<dbReference type="KEGG" id="aga:1280947"/>
<dbReference type="CTD" id="44086"/>
<dbReference type="VEuPathDB" id="VectorBase:AGAMI1_010902"/>
<dbReference type="VEuPathDB" id="VectorBase:AGAP011690"/>
<dbReference type="eggNOG" id="KOG3958">
    <property type="taxonomic scope" value="Eukaryota"/>
</dbReference>
<dbReference type="HOGENOM" id="CLU_049964_1_0_1"/>
<dbReference type="InParanoid" id="Q7PZ25"/>
<dbReference type="OMA" id="YKFGDWE"/>
<dbReference type="PhylomeDB" id="Q7PZ25"/>
<dbReference type="Proteomes" id="UP000007062">
    <property type="component" value="Chromosome 3L"/>
</dbReference>
<dbReference type="GO" id="GO:0005813">
    <property type="term" value="C:centrosome"/>
    <property type="evidence" value="ECO:0000318"/>
    <property type="project" value="GO_Central"/>
</dbReference>
<dbReference type="GO" id="GO:0005737">
    <property type="term" value="C:cytoplasm"/>
    <property type="evidence" value="ECO:0000318"/>
    <property type="project" value="GO_Central"/>
</dbReference>
<dbReference type="GO" id="GO:0005869">
    <property type="term" value="C:dynactin complex"/>
    <property type="evidence" value="ECO:0000250"/>
    <property type="project" value="UniProtKB"/>
</dbReference>
<dbReference type="GO" id="GO:0030286">
    <property type="term" value="C:dynein complex"/>
    <property type="evidence" value="ECO:0007669"/>
    <property type="project" value="UniProtKB-KW"/>
</dbReference>
<dbReference type="GO" id="GO:0016020">
    <property type="term" value="C:membrane"/>
    <property type="evidence" value="ECO:0007669"/>
    <property type="project" value="UniProtKB-SubCell"/>
</dbReference>
<dbReference type="GO" id="GO:0005874">
    <property type="term" value="C:microtubule"/>
    <property type="evidence" value="ECO:0007669"/>
    <property type="project" value="UniProtKB-KW"/>
</dbReference>
<dbReference type="GO" id="GO:0031982">
    <property type="term" value="C:vesicle"/>
    <property type="evidence" value="ECO:0000250"/>
    <property type="project" value="UniProtKB"/>
</dbReference>
<dbReference type="GO" id="GO:0007080">
    <property type="term" value="P:mitotic metaphase chromosome alignment"/>
    <property type="evidence" value="ECO:0000250"/>
    <property type="project" value="UniProtKB"/>
</dbReference>
<dbReference type="GO" id="GO:0007052">
    <property type="term" value="P:mitotic spindle organization"/>
    <property type="evidence" value="ECO:0000250"/>
    <property type="project" value="UniProtKB"/>
</dbReference>
<dbReference type="InterPro" id="IPR028133">
    <property type="entry name" value="Dynamitin"/>
</dbReference>
<dbReference type="PANTHER" id="PTHR15346">
    <property type="entry name" value="DYNACTIN SUBUNIT"/>
    <property type="match status" value="1"/>
</dbReference>
<dbReference type="Pfam" id="PF04912">
    <property type="entry name" value="Dynamitin"/>
    <property type="match status" value="1"/>
</dbReference>
<accession>Q7PZ25</accession>
<sequence length="387" mass="42865">MADPKFQYLPYIAHDQPDVYETPDVNEAETSDYDEDEPVNDAIERLHISTKDSIGKFRGKYLTGEVDFSDGIGRKNRLGYDARSLDYELAGEGERETPLQRCHRLKCEMNELMEEIEASRADTGRTAEEKASHETVFGVVSTAKKVLESLKLEQVIGSEVVAGGAGGGDAEAKKLIAQIEEYRKTGAVSSSDPKVVANELVQSARVAQLEHRLHQLEVAVGAKPERISRLAGTTGTGNLIEAVQNISAKAALLQPSQLDTIEQRLNNLLQQMNSIQEKSNATGQDPNREQKILELYEIAKSTEPIVQVLPDILNRMLTLESLHKYATNFSKLFAELETTQASILNGVAANKTLLTGVQEAFAQNLENVNKEVKKLEERMTKLQQMIK</sequence>